<sequence>MRFWRERGRENKEHMVAPLCGQIRVLVVGDSGVGKSSLVHLIVKGSSIVRPSQTIGCTVGVKHLTYASPASSSSIIKGDSERDFFVELWDVSGHERYKDCRSLFYSQINGVIFVHDLSQRTTKTNLQKWAGEVSVTGEFSAPLSSGGPGGLPVPYIVIGNKADIAAKGGTNGSSGNLVDAARHWVEKQGLLPHSDELPLSESFPSNVGLIMAAKEARYDKEALTKIFHMLIRRRYFSDELPSPSSAWSLSHAPSQRLDEGTSDEDQFYKRTSLREGDAYKYNTLPQHNLMQSPTLYPQQPPDRYNYAIPRFSLSSVEETSNGNGRSKRMDINV</sequence>
<gene>
    <name evidence="3" type="primary">LIP2</name>
    <name evidence="5" type="ordered locus">At5g09910</name>
    <name evidence="6" type="ORF">MYH9.12</name>
</gene>
<organism evidence="7">
    <name type="scientific">Arabidopsis thaliana</name>
    <name type="common">Mouse-ear cress</name>
    <dbReference type="NCBI Taxonomy" id="3702"/>
    <lineage>
        <taxon>Eukaryota</taxon>
        <taxon>Viridiplantae</taxon>
        <taxon>Streptophyta</taxon>
        <taxon>Embryophyta</taxon>
        <taxon>Tracheophyta</taxon>
        <taxon>Spermatophyta</taxon>
        <taxon>Magnoliopsida</taxon>
        <taxon>eudicotyledons</taxon>
        <taxon>Gunneridae</taxon>
        <taxon>Pentapetalae</taxon>
        <taxon>rosids</taxon>
        <taxon>malvids</taxon>
        <taxon>Brassicales</taxon>
        <taxon>Brassicaceae</taxon>
        <taxon>Camelineae</taxon>
        <taxon>Arabidopsis</taxon>
    </lineage>
</organism>
<keyword id="KW-0342">GTP-binding</keyword>
<keyword id="KW-0547">Nucleotide-binding</keyword>
<keyword id="KW-1185">Reference proteome</keyword>
<dbReference type="EMBL" id="AB016893">
    <property type="protein sequence ID" value="BAB09412.1"/>
    <property type="status" value="ALT_SEQ"/>
    <property type="molecule type" value="Genomic_DNA"/>
</dbReference>
<dbReference type="EMBL" id="CP002688">
    <property type="protein sequence ID" value="AED91466.1"/>
    <property type="molecule type" value="Genomic_DNA"/>
</dbReference>
<dbReference type="EMBL" id="CP002688">
    <property type="protein sequence ID" value="ANM69029.1"/>
    <property type="molecule type" value="Genomic_DNA"/>
</dbReference>
<dbReference type="RefSeq" id="NP_001318521.1">
    <property type="nucleotide sequence ID" value="NM_001343075.1"/>
</dbReference>
<dbReference type="RefSeq" id="NP_196553.2">
    <property type="nucleotide sequence ID" value="NM_121028.4"/>
</dbReference>
<dbReference type="SMR" id="F4KFD8"/>
<dbReference type="FunCoup" id="F4KFD8">
    <property type="interactions" value="521"/>
</dbReference>
<dbReference type="STRING" id="3702.F4KFD8"/>
<dbReference type="iPTMnet" id="F4KFD8"/>
<dbReference type="PaxDb" id="3702-AT5G09910.1"/>
<dbReference type="ProteomicsDB" id="238420"/>
<dbReference type="EnsemblPlants" id="AT5G09910.1">
    <property type="protein sequence ID" value="AT5G09910.1"/>
    <property type="gene ID" value="AT5G09910"/>
</dbReference>
<dbReference type="EnsemblPlants" id="AT5G09910.4">
    <property type="protein sequence ID" value="AT5G09910.4"/>
    <property type="gene ID" value="AT5G09910"/>
</dbReference>
<dbReference type="GeneID" id="830852"/>
<dbReference type="Gramene" id="AT5G09910.1">
    <property type="protein sequence ID" value="AT5G09910.1"/>
    <property type="gene ID" value="AT5G09910"/>
</dbReference>
<dbReference type="Gramene" id="AT5G09910.4">
    <property type="protein sequence ID" value="AT5G09910.4"/>
    <property type="gene ID" value="AT5G09910"/>
</dbReference>
<dbReference type="KEGG" id="ath:AT5G09910"/>
<dbReference type="Araport" id="AT5G09910"/>
<dbReference type="TAIR" id="AT5G09910"/>
<dbReference type="eggNOG" id="ENOG502QT3S">
    <property type="taxonomic scope" value="Eukaryota"/>
</dbReference>
<dbReference type="HOGENOM" id="CLU_061105_0_0_1"/>
<dbReference type="InParanoid" id="F4KFD8"/>
<dbReference type="OMA" id="YDKEAMI"/>
<dbReference type="PRO" id="PR:F4KFD8"/>
<dbReference type="Proteomes" id="UP000006548">
    <property type="component" value="Chromosome 5"/>
</dbReference>
<dbReference type="ExpressionAtlas" id="F4KFD8">
    <property type="expression patterns" value="baseline and differential"/>
</dbReference>
<dbReference type="GO" id="GO:0005525">
    <property type="term" value="F:GTP binding"/>
    <property type="evidence" value="ECO:0007669"/>
    <property type="project" value="UniProtKB-KW"/>
</dbReference>
<dbReference type="GO" id="GO:0003924">
    <property type="term" value="F:GTPase activity"/>
    <property type="evidence" value="ECO:0007669"/>
    <property type="project" value="InterPro"/>
</dbReference>
<dbReference type="CDD" id="cd04102">
    <property type="entry name" value="RabL3"/>
    <property type="match status" value="1"/>
</dbReference>
<dbReference type="FunFam" id="3.40.50.300:FF:000713">
    <property type="entry name" value="Ras-related small GTP-binding family protein"/>
    <property type="match status" value="1"/>
</dbReference>
<dbReference type="Gene3D" id="3.40.50.300">
    <property type="entry name" value="P-loop containing nucleotide triphosphate hydrolases"/>
    <property type="match status" value="1"/>
</dbReference>
<dbReference type="InterPro" id="IPR027417">
    <property type="entry name" value="P-loop_NTPase"/>
</dbReference>
<dbReference type="InterPro" id="IPR025662">
    <property type="entry name" value="Sigma_54_int_dom_ATP-bd_1"/>
</dbReference>
<dbReference type="InterPro" id="IPR001806">
    <property type="entry name" value="Small_GTPase"/>
</dbReference>
<dbReference type="PANTHER" id="PTHR24073">
    <property type="entry name" value="DRAB5-RELATED"/>
    <property type="match status" value="1"/>
</dbReference>
<dbReference type="Pfam" id="PF08477">
    <property type="entry name" value="Roc"/>
    <property type="match status" value="1"/>
</dbReference>
<dbReference type="PRINTS" id="PR00449">
    <property type="entry name" value="RASTRNSFRMNG"/>
</dbReference>
<dbReference type="SMART" id="SM00175">
    <property type="entry name" value="RAB"/>
    <property type="match status" value="1"/>
</dbReference>
<dbReference type="SMART" id="SM00174">
    <property type="entry name" value="RHO"/>
    <property type="match status" value="1"/>
</dbReference>
<dbReference type="SUPFAM" id="SSF52540">
    <property type="entry name" value="P-loop containing nucleoside triphosphate hydrolases"/>
    <property type="match status" value="1"/>
</dbReference>
<dbReference type="PROSITE" id="PS51419">
    <property type="entry name" value="RAB"/>
    <property type="match status" value="1"/>
</dbReference>
<protein>
    <recommendedName>
        <fullName evidence="3">Small GTPase-like protein LIP2</fullName>
    </recommendedName>
</protein>
<evidence type="ECO:0000250" key="1">
    <source>
        <dbReference type="UniProtKB" id="Q9C5J9"/>
    </source>
</evidence>
<evidence type="ECO:0000256" key="2">
    <source>
        <dbReference type="SAM" id="MobiDB-lite"/>
    </source>
</evidence>
<evidence type="ECO:0000303" key="3">
    <source>
    </source>
</evidence>
<evidence type="ECO:0000305" key="4"/>
<evidence type="ECO:0000312" key="5">
    <source>
        <dbReference type="Araport" id="AT5G09910"/>
    </source>
</evidence>
<evidence type="ECO:0000312" key="6">
    <source>
        <dbReference type="EMBL" id="BAB09412.1"/>
    </source>
</evidence>
<evidence type="ECO:0000312" key="7">
    <source>
        <dbReference type="Proteomes" id="UP000006548"/>
    </source>
</evidence>
<feature type="chain" id="PRO_0000438815" description="Small GTPase-like protein LIP2">
    <location>
        <begin position="1"/>
        <end position="333"/>
    </location>
</feature>
<feature type="region of interest" description="Small GTPase-like" evidence="4">
    <location>
        <begin position="11"/>
        <end position="288"/>
    </location>
</feature>
<feature type="region of interest" description="Disordered" evidence="2">
    <location>
        <begin position="242"/>
        <end position="265"/>
    </location>
</feature>
<feature type="compositionally biased region" description="Polar residues" evidence="2">
    <location>
        <begin position="242"/>
        <end position="253"/>
    </location>
</feature>
<feature type="binding site" evidence="1">
    <location>
        <begin position="29"/>
        <end position="36"/>
    </location>
    <ligand>
        <name>GTP</name>
        <dbReference type="ChEBI" id="CHEBI:37565"/>
    </ligand>
</feature>
<feature type="binding site" evidence="1">
    <location>
        <begin position="90"/>
        <end position="94"/>
    </location>
    <ligand>
        <name>GTP</name>
        <dbReference type="ChEBI" id="CHEBI:37565"/>
    </ligand>
</feature>
<feature type="binding site" evidence="1">
    <location>
        <begin position="160"/>
        <end position="163"/>
    </location>
    <ligand>
        <name>GTP</name>
        <dbReference type="ChEBI" id="CHEBI:37565"/>
    </ligand>
</feature>
<name>LIIP2_ARATH</name>
<reference key="1">
    <citation type="journal article" date="1998" name="DNA Res.">
        <title>Structural analysis of Arabidopsis thaliana chromosome 5. VIII. Sequence features of the regions of 1,081,958 bp covered by seventeen physically assigned P1 and TAC clones.</title>
        <authorList>
            <person name="Asamizu E."/>
            <person name="Sato S."/>
            <person name="Kaneko T."/>
            <person name="Nakamura Y."/>
            <person name="Kotani H."/>
            <person name="Miyajima N."/>
            <person name="Tabata S."/>
        </authorList>
    </citation>
    <scope>NUCLEOTIDE SEQUENCE [LARGE SCALE GENOMIC DNA]</scope>
</reference>
<reference key="2">
    <citation type="journal article" date="2017" name="Plant J.">
        <title>Araport11: a complete reannotation of the Arabidopsis thaliana reference genome.</title>
        <authorList>
            <person name="Cheng C.Y."/>
            <person name="Krishnakumar V."/>
            <person name="Chan A.P."/>
            <person name="Thibaud-Nissen F."/>
            <person name="Schobel S."/>
            <person name="Town C.D."/>
        </authorList>
    </citation>
    <scope>GENOME REANNOTATION</scope>
    <source>
        <strain>cv. Columbia</strain>
    </source>
</reference>
<reference key="3">
    <citation type="journal article" date="2007" name="Curr. Biol.">
        <title>Arabidopsis thaliana circadian clock is regulated by the small GTPase LIP1.</title>
        <authorList>
            <person name="Kevei E."/>
            <person name="Gyula P."/>
            <person name="Feher B."/>
            <person name="Toth R."/>
            <person name="Viczian A."/>
            <person name="Kircher S."/>
            <person name="Rea D."/>
            <person name="Dorjgotov D."/>
            <person name="Schaefer E."/>
            <person name="Millar A.J."/>
            <person name="Kozma-Bognar L."/>
            <person name="Nagy F."/>
        </authorList>
    </citation>
    <scope>IDENTIFICATION</scope>
</reference>
<accession>F4KFD8</accession>
<accession>Q9FIB5</accession>
<proteinExistence type="inferred from homology"/>
<comment type="similarity">
    <text evidence="4">Belongs to the small GTPase superfamily.</text>
</comment>
<comment type="sequence caution" evidence="4">
    <conflict type="erroneous gene model prediction">
        <sequence resource="EMBL-CDS" id="BAB09412"/>
    </conflict>
</comment>